<sequence length="438" mass="51895">MPKLSFSDFNDYDNKLKCYLQNKGIEKEFTECKLHGIMNMVDKFNLYNLKDVEQLSFVMWKLRKYFVKLLHNGYLLTRVNFDMFEKKILEYNSTTRVVRHRGMTPLGGLEVDIDPKIFYLDCIKFIGQFTNQQEIYDKCLNILENSQKKLSDNYLPSRIMYLMRYNEYVNVNHNKVTENIFHMNKLSNFYHNVFTITPSQEEQYERYKFEIMEVYHDIARFKSSRYSGQANRIGYVCLTDIMVKNHYHVIDDTDKISYHTKMFRSTTLDSIISKILCEISDQIILPDEELAARKTARKIEKKMNNDLRFISKNDKVEILDVFSNAFICVKDIKYDVEILKRDMLIQLYERGIVDPNSDITYDLMRNAAENGVLWIVKFLVEKGCPVRNLPPSGNGKKQLHEILTEPVLDDLGFGKKWVAKQTETRINLLNYLIDNHYI</sequence>
<feature type="chain" id="PRO_0000247413" description="Uncharacterized protein R819">
    <location>
        <begin position="1"/>
        <end position="438"/>
    </location>
</feature>
<keyword id="KW-1185">Reference proteome</keyword>
<reference key="1">
    <citation type="journal article" date="2004" name="Science">
        <title>The 1.2-megabase genome sequence of Mimivirus.</title>
        <authorList>
            <person name="Raoult D."/>
            <person name="Audic S."/>
            <person name="Robert C."/>
            <person name="Abergel C."/>
            <person name="Renesto P."/>
            <person name="Ogata H."/>
            <person name="La Scola B."/>
            <person name="Susan M."/>
            <person name="Claverie J.-M."/>
        </authorList>
    </citation>
    <scope>NUCLEOTIDE SEQUENCE [LARGE SCALE GENOMIC DNA]</scope>
    <source>
        <strain>Rowbotham-Bradford</strain>
    </source>
</reference>
<accession>Q5UQH2</accession>
<name>YR819_MIMIV</name>
<protein>
    <recommendedName>
        <fullName>Uncharacterized protein R819</fullName>
    </recommendedName>
</protein>
<organism>
    <name type="scientific">Acanthamoeba polyphaga mimivirus</name>
    <name type="common">APMV</name>
    <dbReference type="NCBI Taxonomy" id="212035"/>
    <lineage>
        <taxon>Viruses</taxon>
        <taxon>Varidnaviria</taxon>
        <taxon>Bamfordvirae</taxon>
        <taxon>Nucleocytoviricota</taxon>
        <taxon>Megaviricetes</taxon>
        <taxon>Imitervirales</taxon>
        <taxon>Mimiviridae</taxon>
        <taxon>Megamimivirinae</taxon>
        <taxon>Mimivirus</taxon>
        <taxon>Mimivirus bradfordmassiliense</taxon>
    </lineage>
</organism>
<organismHost>
    <name type="scientific">Acanthamoeba polyphaga</name>
    <name type="common">Amoeba</name>
    <dbReference type="NCBI Taxonomy" id="5757"/>
</organismHost>
<gene>
    <name type="ordered locus">MIMI_R819</name>
</gene>
<proteinExistence type="predicted"/>
<dbReference type="EMBL" id="AY653733">
    <property type="protein sequence ID" value="AAV51079.1"/>
    <property type="molecule type" value="Genomic_DNA"/>
</dbReference>
<dbReference type="KEGG" id="vg:9925482"/>
<dbReference type="Proteomes" id="UP000001134">
    <property type="component" value="Genome"/>
</dbReference>